<dbReference type="EMBL" id="CP000082">
    <property type="protein sequence ID" value="AAZ19701.1"/>
    <property type="molecule type" value="Genomic_DNA"/>
</dbReference>
<dbReference type="RefSeq" id="WP_011281111.1">
    <property type="nucleotide sequence ID" value="NC_007204.1"/>
</dbReference>
<dbReference type="SMR" id="Q4FQK7"/>
<dbReference type="STRING" id="259536.Psyc_1853"/>
<dbReference type="KEGG" id="par:Psyc_1853"/>
<dbReference type="eggNOG" id="COG0393">
    <property type="taxonomic scope" value="Bacteria"/>
</dbReference>
<dbReference type="HOGENOM" id="CLU_117144_1_0_6"/>
<dbReference type="OrthoDB" id="9796448at2"/>
<dbReference type="Proteomes" id="UP000000546">
    <property type="component" value="Chromosome"/>
</dbReference>
<dbReference type="Gene3D" id="3.30.110.70">
    <property type="entry name" value="Hypothetical protein apc22750. Chain B"/>
    <property type="match status" value="1"/>
</dbReference>
<dbReference type="HAMAP" id="MF_00338">
    <property type="entry name" value="UPF0145"/>
    <property type="match status" value="1"/>
</dbReference>
<dbReference type="InterPro" id="IPR035439">
    <property type="entry name" value="UPF0145_dom_sf"/>
</dbReference>
<dbReference type="InterPro" id="IPR002765">
    <property type="entry name" value="UPF0145_YbjQ-like"/>
</dbReference>
<dbReference type="PANTHER" id="PTHR34068:SF2">
    <property type="entry name" value="UPF0145 PROTEIN SCO3412"/>
    <property type="match status" value="1"/>
</dbReference>
<dbReference type="PANTHER" id="PTHR34068">
    <property type="entry name" value="UPF0145 PROTEIN YBJQ"/>
    <property type="match status" value="1"/>
</dbReference>
<dbReference type="Pfam" id="PF01906">
    <property type="entry name" value="YbjQ_1"/>
    <property type="match status" value="1"/>
</dbReference>
<dbReference type="SUPFAM" id="SSF117782">
    <property type="entry name" value="YbjQ-like"/>
    <property type="match status" value="1"/>
</dbReference>
<reference key="1">
    <citation type="journal article" date="2010" name="Appl. Environ. Microbiol.">
        <title>The genome sequence of Psychrobacter arcticus 273-4, a psychroactive Siberian permafrost bacterium, reveals mechanisms for adaptation to low-temperature growth.</title>
        <authorList>
            <person name="Ayala-del-Rio H.L."/>
            <person name="Chain P.S."/>
            <person name="Grzymski J.J."/>
            <person name="Ponder M.A."/>
            <person name="Ivanova N."/>
            <person name="Bergholz P.W."/>
            <person name="Di Bartolo G."/>
            <person name="Hauser L."/>
            <person name="Land M."/>
            <person name="Bakermans C."/>
            <person name="Rodrigues D."/>
            <person name="Klappenbach J."/>
            <person name="Zarka D."/>
            <person name="Larimer F."/>
            <person name="Richardson P."/>
            <person name="Murray A."/>
            <person name="Thomashow M."/>
            <person name="Tiedje J.M."/>
        </authorList>
    </citation>
    <scope>NUCLEOTIDE SEQUENCE [LARGE SCALE GENOMIC DNA]</scope>
    <source>
        <strain>DSM 17307 / VKM B-2377 / 273-4</strain>
    </source>
</reference>
<name>Y1853_PSYA2</name>
<organism>
    <name type="scientific">Psychrobacter arcticus (strain DSM 17307 / VKM B-2377 / 273-4)</name>
    <dbReference type="NCBI Taxonomy" id="259536"/>
    <lineage>
        <taxon>Bacteria</taxon>
        <taxon>Pseudomonadati</taxon>
        <taxon>Pseudomonadota</taxon>
        <taxon>Gammaproteobacteria</taxon>
        <taxon>Moraxellales</taxon>
        <taxon>Moraxellaceae</taxon>
        <taxon>Psychrobacter</taxon>
    </lineage>
</organism>
<sequence>MTVQLSNLEHLPNYQITERLDVVYGSTVRSKHVGKDLFAGLKNIVGGELTAYTELLEESRQEAIDRMIVKAEALGADAVVGLRFSTSSIAQGASELFVYGTAVKAVPMQQQPIYQSSNQPPSHHSGHSQYEEPVPSAAQPSTTAQANDDLPRFNPFGE</sequence>
<feature type="chain" id="PRO_0000225839" description="UPF0145 protein Psyc_1853">
    <location>
        <begin position="1"/>
        <end position="158"/>
    </location>
</feature>
<feature type="region of interest" description="Disordered" evidence="2">
    <location>
        <begin position="113"/>
        <end position="158"/>
    </location>
</feature>
<feature type="compositionally biased region" description="Polar residues" evidence="2">
    <location>
        <begin position="113"/>
        <end position="122"/>
    </location>
</feature>
<accession>Q4FQK7</accession>
<gene>
    <name type="ordered locus">Psyc_1853</name>
</gene>
<protein>
    <recommendedName>
        <fullName evidence="1">UPF0145 protein Psyc_1853</fullName>
    </recommendedName>
</protein>
<comment type="similarity">
    <text evidence="1">Belongs to the UPF0145 family.</text>
</comment>
<keyword id="KW-1185">Reference proteome</keyword>
<proteinExistence type="inferred from homology"/>
<evidence type="ECO:0000255" key="1">
    <source>
        <dbReference type="HAMAP-Rule" id="MF_00338"/>
    </source>
</evidence>
<evidence type="ECO:0000256" key="2">
    <source>
        <dbReference type="SAM" id="MobiDB-lite"/>
    </source>
</evidence>